<name>MLTF_HAEIE</name>
<evidence type="ECO:0000255" key="1">
    <source>
        <dbReference type="HAMAP-Rule" id="MF_02016"/>
    </source>
</evidence>
<feature type="signal peptide" evidence="1">
    <location>
        <begin position="1"/>
        <end position="13"/>
    </location>
</feature>
<feature type="chain" id="PRO_0000353941" description="Membrane-bound lytic murein transglycosylase F">
    <location>
        <begin position="14"/>
        <end position="482"/>
    </location>
</feature>
<feature type="region of interest" description="Non-LT domain" evidence="1">
    <location>
        <begin position="14"/>
        <end position="267"/>
    </location>
</feature>
<feature type="region of interest" description="LT domain" evidence="1">
    <location>
        <begin position="268"/>
        <end position="482"/>
    </location>
</feature>
<feature type="active site" evidence="1">
    <location>
        <position position="312"/>
    </location>
</feature>
<proteinExistence type="inferred from homology"/>
<gene>
    <name evidence="1" type="primary">mltF</name>
    <name type="ordered locus">CGSHiEE_01915</name>
</gene>
<organism>
    <name type="scientific">Haemophilus influenzae (strain PittEE)</name>
    <dbReference type="NCBI Taxonomy" id="374930"/>
    <lineage>
        <taxon>Bacteria</taxon>
        <taxon>Pseudomonadati</taxon>
        <taxon>Pseudomonadota</taxon>
        <taxon>Gammaproteobacteria</taxon>
        <taxon>Pasteurellales</taxon>
        <taxon>Pasteurellaceae</taxon>
        <taxon>Haemophilus</taxon>
    </lineage>
</organism>
<sequence length="482" mass="56014">MKGLFLRIITALALLFWAIDMVFPWQFLRHTEENHYAAIQSRGALYVGTINNQISYFTNNDGERGFEYELAKAFADSLGVELEMKTFDNQEQLFDELDKHNIDLAAAHILYHPKNAERFQIGPAYHSASWQLAYRKNENRPKNLGNVKKDIYISNNLALEETLKELQKQYPQLTWKRNQTLTQEELLLQLAEGKIPYVIANSIDIAAMQQIKPELAIAFDITDEANVHWYLPNKSYHDLQTALLNFMNNAEETGLLDNLKEKYLGHISQFDYVDTRSYMNAIENTLPQYSPLFEKYQGELDWRLLAAVAYQESHWDPHATSPTGVRGIMMLTKNTAQHMKISDRTNPEQSIKAGSEYLHWLISQLPESIEKEEKIWFALVAYNIGLGHLIDARRLTQNLGGNPDNWLDVKKNLPLLAEKRYYSQLKYGYARGYEAYQYVENIRRYMNSIVNYHRVQENQIINDNASNESAVKNLEEIKENKD</sequence>
<protein>
    <recommendedName>
        <fullName evidence="1">Membrane-bound lytic murein transglycosylase F</fullName>
        <ecNumber evidence="1">4.2.2.n1</ecNumber>
    </recommendedName>
    <alternativeName>
        <fullName evidence="1">Murein lyase F</fullName>
    </alternativeName>
</protein>
<keyword id="KW-0998">Cell outer membrane</keyword>
<keyword id="KW-0961">Cell wall biogenesis/degradation</keyword>
<keyword id="KW-0456">Lyase</keyword>
<keyword id="KW-0472">Membrane</keyword>
<keyword id="KW-0732">Signal</keyword>
<reference key="1">
    <citation type="journal article" date="2007" name="Genome Biol.">
        <title>Characterization and modeling of the Haemophilus influenzae core and supragenomes based on the complete genomic sequences of Rd and 12 clinical nontypeable strains.</title>
        <authorList>
            <person name="Hogg J.S."/>
            <person name="Hu F.Z."/>
            <person name="Janto B."/>
            <person name="Boissy R."/>
            <person name="Hayes J."/>
            <person name="Keefe R."/>
            <person name="Post J.C."/>
            <person name="Ehrlich G.D."/>
        </authorList>
    </citation>
    <scope>NUCLEOTIDE SEQUENCE [LARGE SCALE GENOMIC DNA]</scope>
    <source>
        <strain>PittEE</strain>
    </source>
</reference>
<accession>A5UAQ3</accession>
<comment type="function">
    <text evidence="1">Murein-degrading enzyme that degrades murein glycan strands and insoluble, high-molecular weight murein sacculi, with the concomitant formation of a 1,6-anhydromuramoyl product. Lytic transglycosylases (LTs) play an integral role in the metabolism of the peptidoglycan (PG) sacculus. Their lytic action creates space within the PG sacculus to allow for its expansion as well as for the insertion of various structures such as secretion systems and flagella.</text>
</comment>
<comment type="catalytic activity">
    <reaction evidence="1">
        <text>Exolytic cleavage of the (1-&gt;4)-beta-glycosidic linkage between N-acetylmuramic acid (MurNAc) and N-acetylglucosamine (GlcNAc) residues in peptidoglycan, from either the reducing or the non-reducing ends of the peptidoglycan chains, with concomitant formation of a 1,6-anhydrobond in the MurNAc residue.</text>
        <dbReference type="EC" id="4.2.2.n1"/>
    </reaction>
</comment>
<comment type="subcellular location">
    <subcellularLocation>
        <location>Cell outer membrane</location>
        <topology>Peripheral membrane protein</topology>
    </subcellularLocation>
    <text evidence="1">Attached to the inner leaflet of the outer membrane.</text>
</comment>
<comment type="domain">
    <text evidence="1">The N-terminal domain does not have lytic activity and probably modulates enzymatic activity. The C-terminal domain is the catalytic active domain.</text>
</comment>
<comment type="similarity">
    <text evidence="1">In the N-terminal section; belongs to the bacterial solute-binding protein 3 family.</text>
</comment>
<comment type="similarity">
    <text evidence="1">In the C-terminal section; belongs to the transglycosylase Slt family.</text>
</comment>
<dbReference type="EC" id="4.2.2.n1" evidence="1"/>
<dbReference type="EMBL" id="CP000671">
    <property type="protein sequence ID" value="ABQ97854.1"/>
    <property type="molecule type" value="Genomic_DNA"/>
</dbReference>
<dbReference type="SMR" id="A5UAQ3"/>
<dbReference type="CAZy" id="GH23">
    <property type="family name" value="Glycoside Hydrolase Family 23"/>
</dbReference>
<dbReference type="KEGG" id="hip:CGSHiEE_01915"/>
<dbReference type="HOGENOM" id="CLU_027494_0_1_6"/>
<dbReference type="GO" id="GO:0009279">
    <property type="term" value="C:cell outer membrane"/>
    <property type="evidence" value="ECO:0007669"/>
    <property type="project" value="UniProtKB-SubCell"/>
</dbReference>
<dbReference type="GO" id="GO:0008933">
    <property type="term" value="F:peptidoglycan lytic transglycosylase activity"/>
    <property type="evidence" value="ECO:0007669"/>
    <property type="project" value="UniProtKB-UniRule"/>
</dbReference>
<dbReference type="GO" id="GO:0016998">
    <property type="term" value="P:cell wall macromolecule catabolic process"/>
    <property type="evidence" value="ECO:0007669"/>
    <property type="project" value="UniProtKB-UniRule"/>
</dbReference>
<dbReference type="GO" id="GO:0071555">
    <property type="term" value="P:cell wall organization"/>
    <property type="evidence" value="ECO:0007669"/>
    <property type="project" value="UniProtKB-KW"/>
</dbReference>
<dbReference type="GO" id="GO:0009253">
    <property type="term" value="P:peptidoglycan catabolic process"/>
    <property type="evidence" value="ECO:0007669"/>
    <property type="project" value="TreeGrafter"/>
</dbReference>
<dbReference type="CDD" id="cd13403">
    <property type="entry name" value="MLTF-like"/>
    <property type="match status" value="1"/>
</dbReference>
<dbReference type="CDD" id="cd01009">
    <property type="entry name" value="PBP2_YfhD_N"/>
    <property type="match status" value="1"/>
</dbReference>
<dbReference type="FunFam" id="1.10.530.10:FF:000003">
    <property type="entry name" value="Membrane-bound lytic murein transglycosylase F"/>
    <property type="match status" value="1"/>
</dbReference>
<dbReference type="Gene3D" id="1.10.530.10">
    <property type="match status" value="1"/>
</dbReference>
<dbReference type="Gene3D" id="3.40.190.10">
    <property type="entry name" value="Periplasmic binding protein-like II"/>
    <property type="match status" value="2"/>
</dbReference>
<dbReference type="HAMAP" id="MF_02016">
    <property type="entry name" value="MltF"/>
    <property type="match status" value="1"/>
</dbReference>
<dbReference type="InterPro" id="IPR023346">
    <property type="entry name" value="Lysozyme-like_dom_sf"/>
</dbReference>
<dbReference type="InterPro" id="IPR023703">
    <property type="entry name" value="MltF"/>
</dbReference>
<dbReference type="InterPro" id="IPR001638">
    <property type="entry name" value="Solute-binding_3/MltF_N"/>
</dbReference>
<dbReference type="InterPro" id="IPR000189">
    <property type="entry name" value="Transglyc_AS"/>
</dbReference>
<dbReference type="InterPro" id="IPR008258">
    <property type="entry name" value="Transglycosylase_SLT_dom_1"/>
</dbReference>
<dbReference type="NCBIfam" id="NF008112">
    <property type="entry name" value="PRK10859.1"/>
    <property type="match status" value="1"/>
</dbReference>
<dbReference type="PANTHER" id="PTHR35936">
    <property type="entry name" value="MEMBRANE-BOUND LYTIC MUREIN TRANSGLYCOSYLASE F"/>
    <property type="match status" value="1"/>
</dbReference>
<dbReference type="PANTHER" id="PTHR35936:SF32">
    <property type="entry name" value="MEMBRANE-BOUND LYTIC MUREIN TRANSGLYCOSYLASE F"/>
    <property type="match status" value="1"/>
</dbReference>
<dbReference type="Pfam" id="PF00497">
    <property type="entry name" value="SBP_bac_3"/>
    <property type="match status" value="1"/>
</dbReference>
<dbReference type="Pfam" id="PF01464">
    <property type="entry name" value="SLT"/>
    <property type="match status" value="1"/>
</dbReference>
<dbReference type="SMART" id="SM00062">
    <property type="entry name" value="PBPb"/>
    <property type="match status" value="1"/>
</dbReference>
<dbReference type="SUPFAM" id="SSF53955">
    <property type="entry name" value="Lysozyme-like"/>
    <property type="match status" value="1"/>
</dbReference>
<dbReference type="SUPFAM" id="SSF53850">
    <property type="entry name" value="Periplasmic binding protein-like II"/>
    <property type="match status" value="1"/>
</dbReference>
<dbReference type="PROSITE" id="PS00922">
    <property type="entry name" value="TRANSGLYCOSYLASE"/>
    <property type="match status" value="1"/>
</dbReference>